<feature type="chain" id="PRO_0000229953" description="Tetraacyldisaccharide 4'-kinase">
    <location>
        <begin position="1"/>
        <end position="333"/>
    </location>
</feature>
<feature type="binding site" evidence="1">
    <location>
        <begin position="57"/>
        <end position="64"/>
    </location>
    <ligand>
        <name>ATP</name>
        <dbReference type="ChEBI" id="CHEBI:30616"/>
    </ligand>
</feature>
<dbReference type="EC" id="2.7.1.130" evidence="1"/>
<dbReference type="EMBL" id="CP000089">
    <property type="protein sequence ID" value="AAZ47938.1"/>
    <property type="molecule type" value="Genomic_DNA"/>
</dbReference>
<dbReference type="SMR" id="Q47B43"/>
<dbReference type="STRING" id="159087.Daro_3208"/>
<dbReference type="KEGG" id="dar:Daro_3208"/>
<dbReference type="eggNOG" id="COG1663">
    <property type="taxonomic scope" value="Bacteria"/>
</dbReference>
<dbReference type="HOGENOM" id="CLU_038816_2_0_4"/>
<dbReference type="OrthoDB" id="9766423at2"/>
<dbReference type="UniPathway" id="UPA00359">
    <property type="reaction ID" value="UER00482"/>
</dbReference>
<dbReference type="GO" id="GO:0005886">
    <property type="term" value="C:plasma membrane"/>
    <property type="evidence" value="ECO:0007669"/>
    <property type="project" value="TreeGrafter"/>
</dbReference>
<dbReference type="GO" id="GO:0005524">
    <property type="term" value="F:ATP binding"/>
    <property type="evidence" value="ECO:0007669"/>
    <property type="project" value="UniProtKB-UniRule"/>
</dbReference>
<dbReference type="GO" id="GO:0009029">
    <property type="term" value="F:tetraacyldisaccharide 4'-kinase activity"/>
    <property type="evidence" value="ECO:0007669"/>
    <property type="project" value="UniProtKB-UniRule"/>
</dbReference>
<dbReference type="GO" id="GO:0009245">
    <property type="term" value="P:lipid A biosynthetic process"/>
    <property type="evidence" value="ECO:0007669"/>
    <property type="project" value="UniProtKB-UniRule"/>
</dbReference>
<dbReference type="GO" id="GO:0009244">
    <property type="term" value="P:lipopolysaccharide core region biosynthetic process"/>
    <property type="evidence" value="ECO:0007669"/>
    <property type="project" value="TreeGrafter"/>
</dbReference>
<dbReference type="HAMAP" id="MF_00409">
    <property type="entry name" value="LpxK"/>
    <property type="match status" value="1"/>
</dbReference>
<dbReference type="InterPro" id="IPR003758">
    <property type="entry name" value="LpxK"/>
</dbReference>
<dbReference type="InterPro" id="IPR027417">
    <property type="entry name" value="P-loop_NTPase"/>
</dbReference>
<dbReference type="NCBIfam" id="TIGR00682">
    <property type="entry name" value="lpxK"/>
    <property type="match status" value="1"/>
</dbReference>
<dbReference type="PANTHER" id="PTHR42724">
    <property type="entry name" value="TETRAACYLDISACCHARIDE 4'-KINASE"/>
    <property type="match status" value="1"/>
</dbReference>
<dbReference type="PANTHER" id="PTHR42724:SF1">
    <property type="entry name" value="TETRAACYLDISACCHARIDE 4'-KINASE, MITOCHONDRIAL-RELATED"/>
    <property type="match status" value="1"/>
</dbReference>
<dbReference type="Pfam" id="PF02606">
    <property type="entry name" value="LpxK"/>
    <property type="match status" value="1"/>
</dbReference>
<dbReference type="SUPFAM" id="SSF52540">
    <property type="entry name" value="P-loop containing nucleoside triphosphate hydrolases"/>
    <property type="match status" value="1"/>
</dbReference>
<reference key="1">
    <citation type="journal article" date="2009" name="BMC Genomics">
        <title>Metabolic analysis of the soil microbe Dechloromonas aromatica str. RCB: indications of a surprisingly complex life-style and cryptic anaerobic pathways for aromatic degradation.</title>
        <authorList>
            <person name="Salinero K.K."/>
            <person name="Keller K."/>
            <person name="Feil W.S."/>
            <person name="Feil H."/>
            <person name="Trong S."/>
            <person name="Di Bartolo G."/>
            <person name="Lapidus A."/>
        </authorList>
    </citation>
    <scope>NUCLEOTIDE SEQUENCE [LARGE SCALE GENOMIC DNA]</scope>
    <source>
        <strain>RCB</strain>
    </source>
</reference>
<keyword id="KW-0067">ATP-binding</keyword>
<keyword id="KW-0418">Kinase</keyword>
<keyword id="KW-0441">Lipid A biosynthesis</keyword>
<keyword id="KW-0444">Lipid biosynthesis</keyword>
<keyword id="KW-0443">Lipid metabolism</keyword>
<keyword id="KW-0547">Nucleotide-binding</keyword>
<keyword id="KW-0808">Transferase</keyword>
<sequence length="333" mass="36554">MLARWLQRQWFDQRRRQPALWLLLPLAWLYAGLSALNRLLAKPKHLPVPVIVVGNIIVGGAGKTPLTLWLARQLRDRGWRPGIVSRGYGRSGDEVRTVSAQSRPEEVGDEPLLLARRSGVPVWVGRHRAVAGEALLAAHPEVNVLLCDDGLQHYALARDVELVVFDVRGAGNGWRLPVGPLREPVSRLASADAVICNGQPETLLPTATPSFEMSLKPGLFYRVDVAGQSASAESLRDRGRLYALAGIGNPERFFRTLESLGLSCETRPFPDHHRYVAADLAFAKDGILLMTEKDAVKCAGMTAGETWVLPVQAELSPALIDLIVEKLRGRQVA</sequence>
<name>LPXK_DECAR</name>
<protein>
    <recommendedName>
        <fullName evidence="1">Tetraacyldisaccharide 4'-kinase</fullName>
        <ecNumber evidence="1">2.7.1.130</ecNumber>
    </recommendedName>
    <alternativeName>
        <fullName evidence="1">Lipid A 4'-kinase</fullName>
    </alternativeName>
</protein>
<comment type="function">
    <text evidence="1">Transfers the gamma-phosphate of ATP to the 4'-position of a tetraacyldisaccharide 1-phosphate intermediate (termed DS-1-P) to form tetraacyldisaccharide 1,4'-bis-phosphate (lipid IVA).</text>
</comment>
<comment type="catalytic activity">
    <reaction evidence="1">
        <text>a lipid A disaccharide + ATP = a lipid IVA + ADP + H(+)</text>
        <dbReference type="Rhea" id="RHEA:67840"/>
        <dbReference type="ChEBI" id="CHEBI:15378"/>
        <dbReference type="ChEBI" id="CHEBI:30616"/>
        <dbReference type="ChEBI" id="CHEBI:176343"/>
        <dbReference type="ChEBI" id="CHEBI:176425"/>
        <dbReference type="ChEBI" id="CHEBI:456216"/>
        <dbReference type="EC" id="2.7.1.130"/>
    </reaction>
</comment>
<comment type="pathway">
    <text evidence="1">Glycolipid biosynthesis; lipid IV(A) biosynthesis; lipid IV(A) from (3R)-3-hydroxytetradecanoyl-[acyl-carrier-protein] and UDP-N-acetyl-alpha-D-glucosamine: step 6/6.</text>
</comment>
<comment type="similarity">
    <text evidence="1">Belongs to the LpxK family.</text>
</comment>
<accession>Q47B43</accession>
<proteinExistence type="inferred from homology"/>
<evidence type="ECO:0000255" key="1">
    <source>
        <dbReference type="HAMAP-Rule" id="MF_00409"/>
    </source>
</evidence>
<organism>
    <name type="scientific">Dechloromonas aromatica (strain RCB)</name>
    <dbReference type="NCBI Taxonomy" id="159087"/>
    <lineage>
        <taxon>Bacteria</taxon>
        <taxon>Pseudomonadati</taxon>
        <taxon>Pseudomonadota</taxon>
        <taxon>Betaproteobacteria</taxon>
        <taxon>Rhodocyclales</taxon>
        <taxon>Azonexaceae</taxon>
        <taxon>Dechloromonas</taxon>
    </lineage>
</organism>
<gene>
    <name evidence="1" type="primary">lpxK</name>
    <name type="ordered locus">Daro_3208</name>
</gene>